<reference key="1">
    <citation type="journal article" date="2003" name="Lancet">
        <title>Genome sequence of Vibrio parahaemolyticus: a pathogenic mechanism distinct from that of V. cholerae.</title>
        <authorList>
            <person name="Makino K."/>
            <person name="Oshima K."/>
            <person name="Kurokawa K."/>
            <person name="Yokoyama K."/>
            <person name="Uda T."/>
            <person name="Tagomori K."/>
            <person name="Iijima Y."/>
            <person name="Najima M."/>
            <person name="Nakano M."/>
            <person name="Yamashita A."/>
            <person name="Kubota Y."/>
            <person name="Kimura S."/>
            <person name="Yasunaga T."/>
            <person name="Honda T."/>
            <person name="Shinagawa H."/>
            <person name="Hattori M."/>
            <person name="Iida T."/>
        </authorList>
    </citation>
    <scope>NUCLEOTIDE SEQUENCE [LARGE SCALE GENOMIC DNA]</scope>
    <source>
        <strain>RIMD 2210633</strain>
    </source>
</reference>
<reference key="2">
    <citation type="journal article" date="2015" name="MBio">
        <title>Homologs of the Acinetobacter baumannii AceI transporter represent a new family of bacterial multidrug efflux systems.</title>
        <authorList>
            <person name="Hassan K.A."/>
            <person name="Liu Q."/>
            <person name="Henderson P.J."/>
            <person name="Paulsen I.T."/>
        </authorList>
    </citation>
    <scope>FUNCTION</scope>
    <scope>NOMENCLATURE</scope>
</reference>
<comment type="function">
    <text evidence="1 3">Mediates the efflux of short-chain diamines when energized by an electrochemical gradient (By similarity). Confers resistance to chlorhexidine, benzalkonium, proflavine and acriflavine. Mediates efflux of both proflavine and acriflavine via an energy-dependent mechanism (PubMed:25670776).</text>
</comment>
<comment type="subcellular location">
    <subcellularLocation>
        <location evidence="1">Cell inner membrane</location>
        <topology evidence="2">Multi-pass membrane protein</topology>
    </subcellularLocation>
</comment>
<comment type="similarity">
    <text evidence="5">Belongs to the proteobacterial antimicrobial compound efflux (PACE) (TC 2.A.117) family.</text>
</comment>
<dbReference type="EMBL" id="BA000031">
    <property type="protein sequence ID" value="BAC59418.1"/>
    <property type="molecule type" value="Genomic_DNA"/>
</dbReference>
<dbReference type="RefSeq" id="NP_797534.1">
    <property type="nucleotide sequence ID" value="NC_004603.1"/>
</dbReference>
<dbReference type="RefSeq" id="WP_005462438.1">
    <property type="nucleotide sequence ID" value="NC_004603.1"/>
</dbReference>
<dbReference type="TCDB" id="2.A.117.1.13">
    <property type="family name" value="the chlorhexadine exporter (chx) family"/>
</dbReference>
<dbReference type="GeneID" id="1188660"/>
<dbReference type="KEGG" id="vpa:VP1155"/>
<dbReference type="PATRIC" id="fig|223926.6.peg.1096"/>
<dbReference type="eggNOG" id="COG4125">
    <property type="taxonomic scope" value="Bacteria"/>
</dbReference>
<dbReference type="HOGENOM" id="CLU_120004_1_0_6"/>
<dbReference type="Proteomes" id="UP000002493">
    <property type="component" value="Chromosome 1"/>
</dbReference>
<dbReference type="GO" id="GO:0005886">
    <property type="term" value="C:plasma membrane"/>
    <property type="evidence" value="ECO:0007669"/>
    <property type="project" value="UniProtKB-SubCell"/>
</dbReference>
<dbReference type="GO" id="GO:0015297">
    <property type="term" value="F:antiporter activity"/>
    <property type="evidence" value="ECO:0007669"/>
    <property type="project" value="UniProtKB-KW"/>
</dbReference>
<dbReference type="InterPro" id="IPR007896">
    <property type="entry name" value="BTP_bacteria"/>
</dbReference>
<dbReference type="NCBIfam" id="NF033664">
    <property type="entry name" value="PACE_transport"/>
    <property type="match status" value="1"/>
</dbReference>
<dbReference type="Pfam" id="PF05232">
    <property type="entry name" value="BTP"/>
    <property type="match status" value="2"/>
</dbReference>
<accession>Q87QJ4</accession>
<gene>
    <name evidence="6" type="ordered locus">VP1155</name>
</gene>
<name>PACE_VIBPA</name>
<feature type="chain" id="PRO_0000453613" description="Short-chain diamines transporter">
    <location>
        <begin position="1"/>
        <end position="140"/>
    </location>
</feature>
<feature type="transmembrane region" description="Helical" evidence="2">
    <location>
        <begin position="7"/>
        <end position="27"/>
    </location>
</feature>
<feature type="transmembrane region" description="Helical" evidence="2">
    <location>
        <begin position="36"/>
        <end position="56"/>
    </location>
</feature>
<feature type="transmembrane region" description="Helical" evidence="2">
    <location>
        <begin position="79"/>
        <end position="99"/>
    </location>
</feature>
<feature type="transmembrane region" description="Helical" evidence="2">
    <location>
        <begin position="105"/>
        <end position="125"/>
    </location>
</feature>
<proteinExistence type="inferred from homology"/>
<evidence type="ECO:0000250" key="1">
    <source>
        <dbReference type="UniProtKB" id="P0DUT9"/>
    </source>
</evidence>
<evidence type="ECO:0000255" key="2"/>
<evidence type="ECO:0000269" key="3">
    <source>
    </source>
</evidence>
<evidence type="ECO:0000305" key="4"/>
<evidence type="ECO:0000305" key="5">
    <source>
    </source>
</evidence>
<evidence type="ECO:0000312" key="6">
    <source>
        <dbReference type="EMBL" id="BAC59418.1"/>
    </source>
</evidence>
<protein>
    <recommendedName>
        <fullName evidence="1">Short-chain diamines transporter</fullName>
    </recommendedName>
    <alternativeName>
        <fullName evidence="4">Antimicrobial compound efflux protein VP1155</fullName>
    </alternativeName>
</protein>
<organism>
    <name type="scientific">Vibrio parahaemolyticus serotype O3:K6 (strain RIMD 2210633)</name>
    <dbReference type="NCBI Taxonomy" id="223926"/>
    <lineage>
        <taxon>Bacteria</taxon>
        <taxon>Pseudomonadati</taxon>
        <taxon>Pseudomonadota</taxon>
        <taxon>Gammaproteobacteria</taxon>
        <taxon>Vibrionales</taxon>
        <taxon>Vibrionaceae</taxon>
        <taxon>Vibrio</taxon>
    </lineage>
</organism>
<sequence>MTRNERIFHAVLFELMALAIIVPAAALITGKGSSDLALVGIGLSLYTVVWNYIYNLYFDKWFGSNRADRSLAMRLGHTVGFEGGLIFISIPVIAWFLEITFLRALMLEAGFLVFFLFYATGFNWLYDKVQPFGKMRKLLV</sequence>
<keyword id="KW-0050">Antiport</keyword>
<keyword id="KW-0997">Cell inner membrane</keyword>
<keyword id="KW-1003">Cell membrane</keyword>
<keyword id="KW-0472">Membrane</keyword>
<keyword id="KW-0812">Transmembrane</keyword>
<keyword id="KW-1133">Transmembrane helix</keyword>
<keyword id="KW-0813">Transport</keyword>